<keyword id="KW-0240">DNA-directed RNA polymerase</keyword>
<keyword id="KW-0460">Magnesium</keyword>
<keyword id="KW-0479">Metal-binding</keyword>
<keyword id="KW-0548">Nucleotidyltransferase</keyword>
<keyword id="KW-0804">Transcription</keyword>
<keyword id="KW-0808">Transferase</keyword>
<keyword id="KW-0862">Zinc</keyword>
<dbReference type="EC" id="2.7.7.6" evidence="1"/>
<dbReference type="EMBL" id="CP000744">
    <property type="protein sequence ID" value="ABR80873.1"/>
    <property type="molecule type" value="Genomic_DNA"/>
</dbReference>
<dbReference type="RefSeq" id="WP_012074227.1">
    <property type="nucleotide sequence ID" value="NC_009656.1"/>
</dbReference>
<dbReference type="SMR" id="A6UZI2"/>
<dbReference type="GeneID" id="77219192"/>
<dbReference type="KEGG" id="pap:PSPA7_0831"/>
<dbReference type="HOGENOM" id="CLU_000524_3_1_6"/>
<dbReference type="Proteomes" id="UP000001582">
    <property type="component" value="Chromosome"/>
</dbReference>
<dbReference type="GO" id="GO:0000428">
    <property type="term" value="C:DNA-directed RNA polymerase complex"/>
    <property type="evidence" value="ECO:0007669"/>
    <property type="project" value="UniProtKB-KW"/>
</dbReference>
<dbReference type="GO" id="GO:0003677">
    <property type="term" value="F:DNA binding"/>
    <property type="evidence" value="ECO:0007669"/>
    <property type="project" value="UniProtKB-UniRule"/>
</dbReference>
<dbReference type="GO" id="GO:0003899">
    <property type="term" value="F:DNA-directed RNA polymerase activity"/>
    <property type="evidence" value="ECO:0007669"/>
    <property type="project" value="UniProtKB-UniRule"/>
</dbReference>
<dbReference type="GO" id="GO:0000287">
    <property type="term" value="F:magnesium ion binding"/>
    <property type="evidence" value="ECO:0007669"/>
    <property type="project" value="UniProtKB-UniRule"/>
</dbReference>
<dbReference type="GO" id="GO:0008270">
    <property type="term" value="F:zinc ion binding"/>
    <property type="evidence" value="ECO:0007669"/>
    <property type="project" value="UniProtKB-UniRule"/>
</dbReference>
<dbReference type="GO" id="GO:0006351">
    <property type="term" value="P:DNA-templated transcription"/>
    <property type="evidence" value="ECO:0007669"/>
    <property type="project" value="UniProtKB-UniRule"/>
</dbReference>
<dbReference type="CDD" id="cd02655">
    <property type="entry name" value="RNAP_beta'_C"/>
    <property type="match status" value="1"/>
</dbReference>
<dbReference type="CDD" id="cd01609">
    <property type="entry name" value="RNAP_beta'_N"/>
    <property type="match status" value="1"/>
</dbReference>
<dbReference type="FunFam" id="1.10.132.30:FF:000003">
    <property type="entry name" value="DNA-directed RNA polymerase subunit beta"/>
    <property type="match status" value="1"/>
</dbReference>
<dbReference type="FunFam" id="1.10.150.390:FF:000002">
    <property type="entry name" value="DNA-directed RNA polymerase subunit beta"/>
    <property type="match status" value="1"/>
</dbReference>
<dbReference type="FunFam" id="1.10.40.90:FF:000001">
    <property type="entry name" value="DNA-directed RNA polymerase subunit beta"/>
    <property type="match status" value="1"/>
</dbReference>
<dbReference type="FunFam" id="4.10.860.120:FF:000001">
    <property type="entry name" value="DNA-directed RNA polymerase subunit beta"/>
    <property type="match status" value="1"/>
</dbReference>
<dbReference type="Gene3D" id="1.10.132.30">
    <property type="match status" value="1"/>
</dbReference>
<dbReference type="Gene3D" id="1.10.150.390">
    <property type="match status" value="1"/>
</dbReference>
<dbReference type="Gene3D" id="1.10.1790.20">
    <property type="match status" value="1"/>
</dbReference>
<dbReference type="Gene3D" id="1.10.40.90">
    <property type="match status" value="1"/>
</dbReference>
<dbReference type="Gene3D" id="2.40.40.20">
    <property type="match status" value="1"/>
</dbReference>
<dbReference type="Gene3D" id="2.40.50.100">
    <property type="match status" value="3"/>
</dbReference>
<dbReference type="Gene3D" id="4.10.860.120">
    <property type="entry name" value="RNA polymerase II, clamp domain"/>
    <property type="match status" value="1"/>
</dbReference>
<dbReference type="Gene3D" id="1.10.274.100">
    <property type="entry name" value="RNA polymerase Rpb1, domain 3"/>
    <property type="match status" value="1"/>
</dbReference>
<dbReference type="HAMAP" id="MF_01322">
    <property type="entry name" value="RNApol_bact_RpoC"/>
    <property type="match status" value="1"/>
</dbReference>
<dbReference type="InterPro" id="IPR045867">
    <property type="entry name" value="DNA-dir_RpoC_beta_prime"/>
</dbReference>
<dbReference type="InterPro" id="IPR012754">
    <property type="entry name" value="DNA-dir_RpoC_beta_prime_bact"/>
</dbReference>
<dbReference type="InterPro" id="IPR000722">
    <property type="entry name" value="RNA_pol_asu"/>
</dbReference>
<dbReference type="InterPro" id="IPR006592">
    <property type="entry name" value="RNA_pol_N"/>
</dbReference>
<dbReference type="InterPro" id="IPR007080">
    <property type="entry name" value="RNA_pol_Rpb1_1"/>
</dbReference>
<dbReference type="InterPro" id="IPR007066">
    <property type="entry name" value="RNA_pol_Rpb1_3"/>
</dbReference>
<dbReference type="InterPro" id="IPR042102">
    <property type="entry name" value="RNA_pol_Rpb1_3_sf"/>
</dbReference>
<dbReference type="InterPro" id="IPR007083">
    <property type="entry name" value="RNA_pol_Rpb1_4"/>
</dbReference>
<dbReference type="InterPro" id="IPR007081">
    <property type="entry name" value="RNA_pol_Rpb1_5"/>
</dbReference>
<dbReference type="InterPro" id="IPR044893">
    <property type="entry name" value="RNA_pol_Rpb1_clamp_domain"/>
</dbReference>
<dbReference type="InterPro" id="IPR038120">
    <property type="entry name" value="Rpb1_funnel_sf"/>
</dbReference>
<dbReference type="NCBIfam" id="TIGR02386">
    <property type="entry name" value="rpoC_TIGR"/>
    <property type="match status" value="1"/>
</dbReference>
<dbReference type="PANTHER" id="PTHR19376">
    <property type="entry name" value="DNA-DIRECTED RNA POLYMERASE"/>
    <property type="match status" value="1"/>
</dbReference>
<dbReference type="PANTHER" id="PTHR19376:SF54">
    <property type="entry name" value="DNA-DIRECTED RNA POLYMERASE SUBUNIT BETA"/>
    <property type="match status" value="1"/>
</dbReference>
<dbReference type="Pfam" id="PF04997">
    <property type="entry name" value="RNA_pol_Rpb1_1"/>
    <property type="match status" value="1"/>
</dbReference>
<dbReference type="Pfam" id="PF00623">
    <property type="entry name" value="RNA_pol_Rpb1_2"/>
    <property type="match status" value="2"/>
</dbReference>
<dbReference type="Pfam" id="PF04983">
    <property type="entry name" value="RNA_pol_Rpb1_3"/>
    <property type="match status" value="1"/>
</dbReference>
<dbReference type="Pfam" id="PF05000">
    <property type="entry name" value="RNA_pol_Rpb1_4"/>
    <property type="match status" value="1"/>
</dbReference>
<dbReference type="Pfam" id="PF04998">
    <property type="entry name" value="RNA_pol_Rpb1_5"/>
    <property type="match status" value="1"/>
</dbReference>
<dbReference type="SMART" id="SM00663">
    <property type="entry name" value="RPOLA_N"/>
    <property type="match status" value="1"/>
</dbReference>
<dbReference type="SUPFAM" id="SSF64484">
    <property type="entry name" value="beta and beta-prime subunits of DNA dependent RNA-polymerase"/>
    <property type="match status" value="1"/>
</dbReference>
<accession>A6UZI2</accession>
<feature type="chain" id="PRO_0000353410" description="DNA-directed RNA polymerase subunit beta'">
    <location>
        <begin position="1"/>
        <end position="1399"/>
    </location>
</feature>
<feature type="region of interest" description="Disordered" evidence="2">
    <location>
        <begin position="1367"/>
        <end position="1399"/>
    </location>
</feature>
<feature type="compositionally biased region" description="Low complexity" evidence="2">
    <location>
        <begin position="1382"/>
        <end position="1399"/>
    </location>
</feature>
<feature type="binding site" evidence="1">
    <location>
        <position position="70"/>
    </location>
    <ligand>
        <name>Zn(2+)</name>
        <dbReference type="ChEBI" id="CHEBI:29105"/>
        <label>1</label>
    </ligand>
</feature>
<feature type="binding site" evidence="1">
    <location>
        <position position="72"/>
    </location>
    <ligand>
        <name>Zn(2+)</name>
        <dbReference type="ChEBI" id="CHEBI:29105"/>
        <label>1</label>
    </ligand>
</feature>
<feature type="binding site" evidence="1">
    <location>
        <position position="85"/>
    </location>
    <ligand>
        <name>Zn(2+)</name>
        <dbReference type="ChEBI" id="CHEBI:29105"/>
        <label>1</label>
    </ligand>
</feature>
<feature type="binding site" evidence="1">
    <location>
        <position position="88"/>
    </location>
    <ligand>
        <name>Zn(2+)</name>
        <dbReference type="ChEBI" id="CHEBI:29105"/>
        <label>1</label>
    </ligand>
</feature>
<feature type="binding site" evidence="1">
    <location>
        <position position="460"/>
    </location>
    <ligand>
        <name>Mg(2+)</name>
        <dbReference type="ChEBI" id="CHEBI:18420"/>
    </ligand>
</feature>
<feature type="binding site" evidence="1">
    <location>
        <position position="462"/>
    </location>
    <ligand>
        <name>Mg(2+)</name>
        <dbReference type="ChEBI" id="CHEBI:18420"/>
    </ligand>
</feature>
<feature type="binding site" evidence="1">
    <location>
        <position position="464"/>
    </location>
    <ligand>
        <name>Mg(2+)</name>
        <dbReference type="ChEBI" id="CHEBI:18420"/>
    </ligand>
</feature>
<feature type="binding site" evidence="1">
    <location>
        <position position="814"/>
    </location>
    <ligand>
        <name>Zn(2+)</name>
        <dbReference type="ChEBI" id="CHEBI:29105"/>
        <label>2</label>
    </ligand>
</feature>
<feature type="binding site" evidence="1">
    <location>
        <position position="888"/>
    </location>
    <ligand>
        <name>Zn(2+)</name>
        <dbReference type="ChEBI" id="CHEBI:29105"/>
        <label>2</label>
    </ligand>
</feature>
<feature type="binding site" evidence="1">
    <location>
        <position position="895"/>
    </location>
    <ligand>
        <name>Zn(2+)</name>
        <dbReference type="ChEBI" id="CHEBI:29105"/>
        <label>2</label>
    </ligand>
</feature>
<feature type="binding site" evidence="1">
    <location>
        <position position="898"/>
    </location>
    <ligand>
        <name>Zn(2+)</name>
        <dbReference type="ChEBI" id="CHEBI:29105"/>
        <label>2</label>
    </ligand>
</feature>
<evidence type="ECO:0000255" key="1">
    <source>
        <dbReference type="HAMAP-Rule" id="MF_01322"/>
    </source>
</evidence>
<evidence type="ECO:0000256" key="2">
    <source>
        <dbReference type="SAM" id="MobiDB-lite"/>
    </source>
</evidence>
<proteinExistence type="inferred from homology"/>
<sequence>MKDLLNLLKNQGQIEEFDAIRIGLASPEMIRSWSFGEVKKPETINYRTFKPERDGLFCAKIFGPVKDYECLCGKYKRLKHRGVICEKCGVEVALAKVRRERMGHIELASPVAHIWFLKSLPSRIGLLLDMTLRDIERVLYFESYVVIDPGMTTLEKGQLLNDEQYFEALEEFGDDFDARMGAEAVHELLNAIDLEHEIGRLREEIPQTNSETKIKKLSKRLKLMEAFQGSGNKPEWMVLTVLPVLPPDLRPLVPLDGGRFATSDLNDLYRRVINRNNRLKRLLDLAAPDIIVRNEKRMLQEAVDALLDNGRRGRAITGSNKRPLKSLADMIKGKQGRFRQNLLGKRVDYSGRSVITVGPTLRLHQCGLPKKMALELFKPFIFGKLEGRGMATTIKAAKKMVERELPEVWDVLAEVIREHPVLLNRAPTLHRLGIQAFEPVLIEGKAIQLHPLVCAAYNADFDGDQMAVHVPLTLEAQLEARALMMSTNNILSPANGEPIIVPSQDVVMGLYYMTREAINAKGEGMAFADLQEVDRAYRSGQASLHARVKVRINEKVKGEDGQLTANTRIVDTTVGRALLFQVVPAGLPFDVVNQSMKKKAISKLINHCYRVVGLKDTVIFADQLMYTGFAYSTISGVSIGVNDFVIPDEKARIINAATDEVKEIESQYASGLVTQGEKYNKVIDLWSKANDEVSKAMMANLSKEKVVDREGKEVDQESFNSMYMMADSGARGSAAQIRQLAGMRGLMAKPDGSIIETPITANFREGLNVLQYFISTHGARKGLADTALKTANSGYLTRRLVDVAQDLVVTEIDCGTEHGLLMSPHIEGGDVVEPLGERVLGRVIARDVFKPGSDEVIVPAGTLIDEKWVDFLEVMSVDEVVVRSPITCETRHGICAMCYGRDLARGHRVNIGEAVGVIAAQSIGEPGTQLTMRTFHIGGAASRTSAADNVQVKNGGTIRLHNLKHVVRADGALVAVSRSGELAVADDFGRERERYKLPYGAVISVKEGDKVDPGAIVAKWDPHTHPIVTEVDGTVAFVGMEEGITVKRQTDELTGLTNIEVMDPKDRPAAGKDIRPAVKLIDAAGKDLLLPGTDVPAQYFLPANALVNLTDGAKVSIGDVVARIPQETSKTRDITGGLPRVADLFEARRPKEPSILAEISGTISFGKETKGKRRLVITPNDGSDPYEELIPKWRHLNVFEGEQVNRGEVISDGPSNPHDILRLLGVSSLAKYIVNEIQDVYRLQGVKINDKHIETILRQMLRKVEVSESGDSSFIKGDQVELTQVLEENEQLGTEDKFPAKYERVLLGITKASLSTESFISAASFQETTRVLTEAAVTGKRDFLRGLKENVVVGRLIPAGTGLAYHSERKRQRDLGKPQRVSASEAEAALTEALNSSGN</sequence>
<protein>
    <recommendedName>
        <fullName evidence="1">DNA-directed RNA polymerase subunit beta'</fullName>
        <shortName evidence="1">RNAP subunit beta'</shortName>
        <ecNumber evidence="1">2.7.7.6</ecNumber>
    </recommendedName>
    <alternativeName>
        <fullName evidence="1">RNA polymerase subunit beta'</fullName>
    </alternativeName>
    <alternativeName>
        <fullName evidence="1">Transcriptase subunit beta'</fullName>
    </alternativeName>
</protein>
<reference key="1">
    <citation type="submission" date="2007-06" db="EMBL/GenBank/DDBJ databases">
        <authorList>
            <person name="Dodson R.J."/>
            <person name="Harkins D."/>
            <person name="Paulsen I.T."/>
        </authorList>
    </citation>
    <scope>NUCLEOTIDE SEQUENCE [LARGE SCALE GENOMIC DNA]</scope>
    <source>
        <strain>DSM 24068 / PA7</strain>
    </source>
</reference>
<comment type="function">
    <text evidence="1">DNA-dependent RNA polymerase catalyzes the transcription of DNA into RNA using the four ribonucleoside triphosphates as substrates.</text>
</comment>
<comment type="catalytic activity">
    <reaction evidence="1">
        <text>RNA(n) + a ribonucleoside 5'-triphosphate = RNA(n+1) + diphosphate</text>
        <dbReference type="Rhea" id="RHEA:21248"/>
        <dbReference type="Rhea" id="RHEA-COMP:14527"/>
        <dbReference type="Rhea" id="RHEA-COMP:17342"/>
        <dbReference type="ChEBI" id="CHEBI:33019"/>
        <dbReference type="ChEBI" id="CHEBI:61557"/>
        <dbReference type="ChEBI" id="CHEBI:140395"/>
        <dbReference type="EC" id="2.7.7.6"/>
    </reaction>
</comment>
<comment type="cofactor">
    <cofactor evidence="1">
        <name>Mg(2+)</name>
        <dbReference type="ChEBI" id="CHEBI:18420"/>
    </cofactor>
    <text evidence="1">Binds 1 Mg(2+) ion per subunit.</text>
</comment>
<comment type="cofactor">
    <cofactor evidence="1">
        <name>Zn(2+)</name>
        <dbReference type="ChEBI" id="CHEBI:29105"/>
    </cofactor>
    <text evidence="1">Binds 2 Zn(2+) ions per subunit.</text>
</comment>
<comment type="subunit">
    <text evidence="1">The RNAP catalytic core consists of 2 alpha, 1 beta, 1 beta' and 1 omega subunit. When a sigma factor is associated with the core the holoenzyme is formed, which can initiate transcription.</text>
</comment>
<comment type="similarity">
    <text evidence="1">Belongs to the RNA polymerase beta' chain family.</text>
</comment>
<name>RPOC_PSEP7</name>
<organism>
    <name type="scientific">Pseudomonas paraeruginosa (strain DSM 24068 / PA7)</name>
    <name type="common">Pseudomonas aeruginosa (strain PA7)</name>
    <dbReference type="NCBI Taxonomy" id="381754"/>
    <lineage>
        <taxon>Bacteria</taxon>
        <taxon>Pseudomonadati</taxon>
        <taxon>Pseudomonadota</taxon>
        <taxon>Gammaproteobacteria</taxon>
        <taxon>Pseudomonadales</taxon>
        <taxon>Pseudomonadaceae</taxon>
        <taxon>Pseudomonas</taxon>
        <taxon>Pseudomonas paraeruginosa</taxon>
    </lineage>
</organism>
<gene>
    <name evidence="1" type="primary">rpoC</name>
    <name type="ordered locus">PSPA7_0831</name>
</gene>